<accession>Q0HV12</accession>
<sequence>MSERAPVVTIDGPSGAGKGTISQLLAKHLGWQLLDSGAIYRVLALAAIHHDVELENEESITLLAAHLDVKFLTGNEKDPVQVILEGEDVTTAIRTQECSNAASKVAAFPRVREALLRRQRAFRAAPGLIADGRDMGTVVFPTASAKLYLTASAEERAQRRYNQLQDKGFDVNIERLLAEIIERDDRDMNRPVAPLVPAEDALVIDTSDKGIDEVLELALNYINQKLSIAN</sequence>
<reference key="1">
    <citation type="submission" date="2006-08" db="EMBL/GenBank/DDBJ databases">
        <title>Complete sequence of chromosome 1 of Shewanella sp. MR-7.</title>
        <authorList>
            <person name="Copeland A."/>
            <person name="Lucas S."/>
            <person name="Lapidus A."/>
            <person name="Barry K."/>
            <person name="Detter J.C."/>
            <person name="Glavina del Rio T."/>
            <person name="Hammon N."/>
            <person name="Israni S."/>
            <person name="Dalin E."/>
            <person name="Tice H."/>
            <person name="Pitluck S."/>
            <person name="Kiss H."/>
            <person name="Brettin T."/>
            <person name="Bruce D."/>
            <person name="Han C."/>
            <person name="Tapia R."/>
            <person name="Gilna P."/>
            <person name="Schmutz J."/>
            <person name="Larimer F."/>
            <person name="Land M."/>
            <person name="Hauser L."/>
            <person name="Kyrpides N."/>
            <person name="Mikhailova N."/>
            <person name="Nealson K."/>
            <person name="Konstantinidis K."/>
            <person name="Klappenbach J."/>
            <person name="Tiedje J."/>
            <person name="Richardson P."/>
        </authorList>
    </citation>
    <scope>NUCLEOTIDE SEQUENCE [LARGE SCALE GENOMIC DNA]</scope>
    <source>
        <strain>MR-7</strain>
    </source>
</reference>
<gene>
    <name evidence="1" type="primary">cmk</name>
    <name type="ordered locus">Shewmr7_2055</name>
</gene>
<keyword id="KW-0067">ATP-binding</keyword>
<keyword id="KW-0963">Cytoplasm</keyword>
<keyword id="KW-0418">Kinase</keyword>
<keyword id="KW-0547">Nucleotide-binding</keyword>
<keyword id="KW-0808">Transferase</keyword>
<organism>
    <name type="scientific">Shewanella sp. (strain MR-7)</name>
    <dbReference type="NCBI Taxonomy" id="60481"/>
    <lineage>
        <taxon>Bacteria</taxon>
        <taxon>Pseudomonadati</taxon>
        <taxon>Pseudomonadota</taxon>
        <taxon>Gammaproteobacteria</taxon>
        <taxon>Alteromonadales</taxon>
        <taxon>Shewanellaceae</taxon>
        <taxon>Shewanella</taxon>
    </lineage>
</organism>
<dbReference type="EC" id="2.7.4.25" evidence="1"/>
<dbReference type="EMBL" id="CP000444">
    <property type="protein sequence ID" value="ABI43043.1"/>
    <property type="molecule type" value="Genomic_DNA"/>
</dbReference>
<dbReference type="SMR" id="Q0HV12"/>
<dbReference type="KEGG" id="shm:Shewmr7_2055"/>
<dbReference type="HOGENOM" id="CLU_079959_2_0_6"/>
<dbReference type="GO" id="GO:0005829">
    <property type="term" value="C:cytosol"/>
    <property type="evidence" value="ECO:0007669"/>
    <property type="project" value="TreeGrafter"/>
</dbReference>
<dbReference type="GO" id="GO:0005524">
    <property type="term" value="F:ATP binding"/>
    <property type="evidence" value="ECO:0007669"/>
    <property type="project" value="UniProtKB-UniRule"/>
</dbReference>
<dbReference type="GO" id="GO:0036430">
    <property type="term" value="F:CMP kinase activity"/>
    <property type="evidence" value="ECO:0007669"/>
    <property type="project" value="RHEA"/>
</dbReference>
<dbReference type="GO" id="GO:0036431">
    <property type="term" value="F:dCMP kinase activity"/>
    <property type="evidence" value="ECO:0007669"/>
    <property type="project" value="RHEA"/>
</dbReference>
<dbReference type="GO" id="GO:0015949">
    <property type="term" value="P:nucleobase-containing small molecule interconversion"/>
    <property type="evidence" value="ECO:0007669"/>
    <property type="project" value="TreeGrafter"/>
</dbReference>
<dbReference type="GO" id="GO:0006220">
    <property type="term" value="P:pyrimidine nucleotide metabolic process"/>
    <property type="evidence" value="ECO:0007669"/>
    <property type="project" value="UniProtKB-UniRule"/>
</dbReference>
<dbReference type="CDD" id="cd02020">
    <property type="entry name" value="CMPK"/>
    <property type="match status" value="1"/>
</dbReference>
<dbReference type="FunFam" id="3.40.50.300:FF:000262">
    <property type="entry name" value="Cytidylate kinase"/>
    <property type="match status" value="1"/>
</dbReference>
<dbReference type="Gene3D" id="3.40.50.300">
    <property type="entry name" value="P-loop containing nucleotide triphosphate hydrolases"/>
    <property type="match status" value="1"/>
</dbReference>
<dbReference type="HAMAP" id="MF_00238">
    <property type="entry name" value="Cytidyl_kinase_type1"/>
    <property type="match status" value="1"/>
</dbReference>
<dbReference type="InterPro" id="IPR003136">
    <property type="entry name" value="Cytidylate_kin"/>
</dbReference>
<dbReference type="InterPro" id="IPR011994">
    <property type="entry name" value="Cytidylate_kinase_dom"/>
</dbReference>
<dbReference type="InterPro" id="IPR027417">
    <property type="entry name" value="P-loop_NTPase"/>
</dbReference>
<dbReference type="NCBIfam" id="TIGR00017">
    <property type="entry name" value="cmk"/>
    <property type="match status" value="1"/>
</dbReference>
<dbReference type="PANTHER" id="PTHR21299:SF2">
    <property type="entry name" value="CYTIDYLATE KINASE"/>
    <property type="match status" value="1"/>
</dbReference>
<dbReference type="PANTHER" id="PTHR21299">
    <property type="entry name" value="CYTIDYLATE KINASE/PANTOATE-BETA-ALANINE LIGASE"/>
    <property type="match status" value="1"/>
</dbReference>
<dbReference type="Pfam" id="PF02224">
    <property type="entry name" value="Cytidylate_kin"/>
    <property type="match status" value="1"/>
</dbReference>
<dbReference type="SUPFAM" id="SSF52540">
    <property type="entry name" value="P-loop containing nucleoside triphosphate hydrolases"/>
    <property type="match status" value="1"/>
</dbReference>
<comment type="catalytic activity">
    <reaction evidence="1">
        <text>CMP + ATP = CDP + ADP</text>
        <dbReference type="Rhea" id="RHEA:11600"/>
        <dbReference type="ChEBI" id="CHEBI:30616"/>
        <dbReference type="ChEBI" id="CHEBI:58069"/>
        <dbReference type="ChEBI" id="CHEBI:60377"/>
        <dbReference type="ChEBI" id="CHEBI:456216"/>
        <dbReference type="EC" id="2.7.4.25"/>
    </reaction>
</comment>
<comment type="catalytic activity">
    <reaction evidence="1">
        <text>dCMP + ATP = dCDP + ADP</text>
        <dbReference type="Rhea" id="RHEA:25094"/>
        <dbReference type="ChEBI" id="CHEBI:30616"/>
        <dbReference type="ChEBI" id="CHEBI:57566"/>
        <dbReference type="ChEBI" id="CHEBI:58593"/>
        <dbReference type="ChEBI" id="CHEBI:456216"/>
        <dbReference type="EC" id="2.7.4.25"/>
    </reaction>
</comment>
<comment type="subcellular location">
    <subcellularLocation>
        <location evidence="1">Cytoplasm</location>
    </subcellularLocation>
</comment>
<comment type="similarity">
    <text evidence="1">Belongs to the cytidylate kinase family. Type 1 subfamily.</text>
</comment>
<proteinExistence type="inferred from homology"/>
<protein>
    <recommendedName>
        <fullName evidence="1">Cytidylate kinase</fullName>
        <shortName evidence="1">CK</shortName>
        <ecNumber evidence="1">2.7.4.25</ecNumber>
    </recommendedName>
    <alternativeName>
        <fullName evidence="1">Cytidine monophosphate kinase</fullName>
        <shortName evidence="1">CMP kinase</shortName>
    </alternativeName>
</protein>
<name>KCY_SHESR</name>
<feature type="chain" id="PRO_1000048280" description="Cytidylate kinase">
    <location>
        <begin position="1"/>
        <end position="230"/>
    </location>
</feature>
<feature type="binding site" evidence="1">
    <location>
        <begin position="12"/>
        <end position="20"/>
    </location>
    <ligand>
        <name>ATP</name>
        <dbReference type="ChEBI" id="CHEBI:30616"/>
    </ligand>
</feature>
<evidence type="ECO:0000255" key="1">
    <source>
        <dbReference type="HAMAP-Rule" id="MF_00238"/>
    </source>
</evidence>